<gene>
    <name evidence="1" type="primary">luxS</name>
    <name type="ordered locus">Ecok1_26280</name>
    <name type="ORF">APECO1_3834</name>
</gene>
<proteinExistence type="inferred from homology"/>
<protein>
    <recommendedName>
        <fullName evidence="1">S-ribosylhomocysteine lyase</fullName>
        <ecNumber evidence="1">4.4.1.21</ecNumber>
    </recommendedName>
    <alternativeName>
        <fullName evidence="1">AI-2 synthesis protein</fullName>
    </alternativeName>
    <alternativeName>
        <fullName evidence="1">Autoinducer-2 production protein LuxS</fullName>
    </alternativeName>
</protein>
<name>LUXS_ECOK1</name>
<sequence length="171" mass="19416">MPLLDSFTVDHTRMEAPAVRVAKTMNTPHGDAITVFDLRFCVPNKEVMPERGIHTLEHLFAGFMRNHLNGNGVEIIDISPMGCRTGFYMSLIGTPDEQRVADAWKAAMEDVLKVQDQNQIPELNVYQCGTYQMHSLQEAQDIARSILERDVRINSNEELALPKEKLQELHI</sequence>
<comment type="function">
    <text evidence="1">Involved in the synthesis of autoinducer 2 (AI-2) which is secreted by bacteria and is used to communicate both the cell density and the metabolic potential of the environment. The regulation of gene expression in response to changes in cell density is called quorum sensing. Catalyzes the transformation of S-ribosylhomocysteine (RHC) to homocysteine (HC) and 4,5-dihydroxy-2,3-pentadione (DPD).</text>
</comment>
<comment type="catalytic activity">
    <reaction evidence="1">
        <text>S-(5-deoxy-D-ribos-5-yl)-L-homocysteine = (S)-4,5-dihydroxypentane-2,3-dione + L-homocysteine</text>
        <dbReference type="Rhea" id="RHEA:17753"/>
        <dbReference type="ChEBI" id="CHEBI:29484"/>
        <dbReference type="ChEBI" id="CHEBI:58195"/>
        <dbReference type="ChEBI" id="CHEBI:58199"/>
        <dbReference type="EC" id="4.4.1.21"/>
    </reaction>
</comment>
<comment type="cofactor">
    <cofactor evidence="1">
        <name>Fe cation</name>
        <dbReference type="ChEBI" id="CHEBI:24875"/>
    </cofactor>
    <text evidence="1">Binds 1 Fe cation per subunit.</text>
</comment>
<comment type="subunit">
    <text evidence="1">Homodimer.</text>
</comment>
<comment type="similarity">
    <text evidence="1">Belongs to the LuxS family.</text>
</comment>
<reference key="1">
    <citation type="journal article" date="2007" name="J. Bacteriol.">
        <title>The genome sequence of avian pathogenic Escherichia coli strain O1:K1:H7 shares strong similarities with human extraintestinal pathogenic E. coli genomes.</title>
        <authorList>
            <person name="Johnson T.J."/>
            <person name="Kariyawasam S."/>
            <person name="Wannemuehler Y."/>
            <person name="Mangiamele P."/>
            <person name="Johnson S.J."/>
            <person name="Doetkott C."/>
            <person name="Skyberg J.A."/>
            <person name="Lynne A.M."/>
            <person name="Johnson J.R."/>
            <person name="Nolan L.K."/>
        </authorList>
    </citation>
    <scope>NUCLEOTIDE SEQUENCE [LARGE SCALE GENOMIC DNA]</scope>
</reference>
<feature type="chain" id="PRO_0000297996" description="S-ribosylhomocysteine lyase">
    <location>
        <begin position="1"/>
        <end position="171"/>
    </location>
</feature>
<feature type="binding site" evidence="1">
    <location>
        <position position="54"/>
    </location>
    <ligand>
        <name>Fe cation</name>
        <dbReference type="ChEBI" id="CHEBI:24875"/>
    </ligand>
</feature>
<feature type="binding site" evidence="1">
    <location>
        <position position="58"/>
    </location>
    <ligand>
        <name>Fe cation</name>
        <dbReference type="ChEBI" id="CHEBI:24875"/>
    </ligand>
</feature>
<feature type="binding site" evidence="1">
    <location>
        <position position="128"/>
    </location>
    <ligand>
        <name>Fe cation</name>
        <dbReference type="ChEBI" id="CHEBI:24875"/>
    </ligand>
</feature>
<keyword id="KW-0071">Autoinducer synthesis</keyword>
<keyword id="KW-0408">Iron</keyword>
<keyword id="KW-0456">Lyase</keyword>
<keyword id="KW-0479">Metal-binding</keyword>
<keyword id="KW-0673">Quorum sensing</keyword>
<keyword id="KW-1185">Reference proteome</keyword>
<accession>A1AEN2</accession>
<dbReference type="EC" id="4.4.1.21" evidence="1"/>
<dbReference type="EMBL" id="CP000468">
    <property type="protein sequence ID" value="ABJ02122.1"/>
    <property type="molecule type" value="Genomic_DNA"/>
</dbReference>
<dbReference type="RefSeq" id="WP_001130211.1">
    <property type="nucleotide sequence ID" value="NZ_CADILS010000021.1"/>
</dbReference>
<dbReference type="SMR" id="A1AEN2"/>
<dbReference type="GeneID" id="93779324"/>
<dbReference type="KEGG" id="ecv:APECO1_3834"/>
<dbReference type="HOGENOM" id="CLU_107531_2_0_6"/>
<dbReference type="PHI-base" id="PHI:3731"/>
<dbReference type="Proteomes" id="UP000008216">
    <property type="component" value="Chromosome"/>
</dbReference>
<dbReference type="GO" id="GO:0005506">
    <property type="term" value="F:iron ion binding"/>
    <property type="evidence" value="ECO:0007669"/>
    <property type="project" value="InterPro"/>
</dbReference>
<dbReference type="GO" id="GO:0043768">
    <property type="term" value="F:S-ribosylhomocysteine lyase activity"/>
    <property type="evidence" value="ECO:0007669"/>
    <property type="project" value="UniProtKB-UniRule"/>
</dbReference>
<dbReference type="GO" id="GO:0009372">
    <property type="term" value="P:quorum sensing"/>
    <property type="evidence" value="ECO:0000315"/>
    <property type="project" value="CACAO"/>
</dbReference>
<dbReference type="GO" id="GO:2000145">
    <property type="term" value="P:regulation of cell motility"/>
    <property type="evidence" value="ECO:0000315"/>
    <property type="project" value="CACAO"/>
</dbReference>
<dbReference type="FunFam" id="3.30.1360.80:FF:000001">
    <property type="entry name" value="S-ribosylhomocysteine lyase"/>
    <property type="match status" value="1"/>
</dbReference>
<dbReference type="Gene3D" id="3.30.1360.80">
    <property type="entry name" value="S-ribosylhomocysteinase (LuxS)"/>
    <property type="match status" value="1"/>
</dbReference>
<dbReference type="HAMAP" id="MF_00091">
    <property type="entry name" value="LuxS"/>
    <property type="match status" value="1"/>
</dbReference>
<dbReference type="InterPro" id="IPR037005">
    <property type="entry name" value="LuxS_sf"/>
</dbReference>
<dbReference type="InterPro" id="IPR011249">
    <property type="entry name" value="Metalloenz_LuxS/M16"/>
</dbReference>
<dbReference type="InterPro" id="IPR003815">
    <property type="entry name" value="S-ribosylhomocysteinase"/>
</dbReference>
<dbReference type="NCBIfam" id="NF002602">
    <property type="entry name" value="PRK02260.1-2"/>
    <property type="match status" value="1"/>
</dbReference>
<dbReference type="PANTHER" id="PTHR35799">
    <property type="entry name" value="S-RIBOSYLHOMOCYSTEINE LYASE"/>
    <property type="match status" value="1"/>
</dbReference>
<dbReference type="PANTHER" id="PTHR35799:SF1">
    <property type="entry name" value="S-RIBOSYLHOMOCYSTEINE LYASE"/>
    <property type="match status" value="1"/>
</dbReference>
<dbReference type="Pfam" id="PF02664">
    <property type="entry name" value="LuxS"/>
    <property type="match status" value="1"/>
</dbReference>
<dbReference type="PIRSF" id="PIRSF006160">
    <property type="entry name" value="AI2"/>
    <property type="match status" value="1"/>
</dbReference>
<dbReference type="PRINTS" id="PR01487">
    <property type="entry name" value="LUXSPROTEIN"/>
</dbReference>
<dbReference type="SUPFAM" id="SSF63411">
    <property type="entry name" value="LuxS/MPP-like metallohydrolase"/>
    <property type="match status" value="1"/>
</dbReference>
<organism>
    <name type="scientific">Escherichia coli O1:K1 / APEC</name>
    <dbReference type="NCBI Taxonomy" id="405955"/>
    <lineage>
        <taxon>Bacteria</taxon>
        <taxon>Pseudomonadati</taxon>
        <taxon>Pseudomonadota</taxon>
        <taxon>Gammaproteobacteria</taxon>
        <taxon>Enterobacterales</taxon>
        <taxon>Enterobacteriaceae</taxon>
        <taxon>Escherichia</taxon>
    </lineage>
</organism>
<evidence type="ECO:0000255" key="1">
    <source>
        <dbReference type="HAMAP-Rule" id="MF_00091"/>
    </source>
</evidence>